<accession>Q2NS17</accession>
<evidence type="ECO:0000255" key="1">
    <source>
        <dbReference type="HAMAP-Rule" id="MF_00101"/>
    </source>
</evidence>
<dbReference type="EC" id="2.7.8.7" evidence="1"/>
<dbReference type="EMBL" id="AP008232">
    <property type="protein sequence ID" value="BAE75058.1"/>
    <property type="molecule type" value="Genomic_DNA"/>
</dbReference>
<dbReference type="RefSeq" id="WP_011411607.1">
    <property type="nucleotide sequence ID" value="NC_007712.1"/>
</dbReference>
<dbReference type="SMR" id="Q2NS17"/>
<dbReference type="STRING" id="343509.SG1783"/>
<dbReference type="KEGG" id="sgl:SG1783"/>
<dbReference type="eggNOG" id="COG0736">
    <property type="taxonomic scope" value="Bacteria"/>
</dbReference>
<dbReference type="HOGENOM" id="CLU_089696_3_1_6"/>
<dbReference type="OrthoDB" id="517356at2"/>
<dbReference type="BioCyc" id="SGLO343509:SGP1_RS16195-MONOMER"/>
<dbReference type="Proteomes" id="UP000001932">
    <property type="component" value="Chromosome"/>
</dbReference>
<dbReference type="GO" id="GO:0005737">
    <property type="term" value="C:cytoplasm"/>
    <property type="evidence" value="ECO:0007669"/>
    <property type="project" value="UniProtKB-SubCell"/>
</dbReference>
<dbReference type="GO" id="GO:0008897">
    <property type="term" value="F:holo-[acyl-carrier-protein] synthase activity"/>
    <property type="evidence" value="ECO:0007669"/>
    <property type="project" value="UniProtKB-UniRule"/>
</dbReference>
<dbReference type="GO" id="GO:0000287">
    <property type="term" value="F:magnesium ion binding"/>
    <property type="evidence" value="ECO:0007669"/>
    <property type="project" value="UniProtKB-UniRule"/>
</dbReference>
<dbReference type="GO" id="GO:0006633">
    <property type="term" value="P:fatty acid biosynthetic process"/>
    <property type="evidence" value="ECO:0007669"/>
    <property type="project" value="UniProtKB-UniRule"/>
</dbReference>
<dbReference type="FunFam" id="3.90.470.20:FF:000001">
    <property type="entry name" value="Holo-[acyl-carrier-protein] synthase"/>
    <property type="match status" value="1"/>
</dbReference>
<dbReference type="Gene3D" id="3.90.470.20">
    <property type="entry name" value="4'-phosphopantetheinyl transferase domain"/>
    <property type="match status" value="1"/>
</dbReference>
<dbReference type="HAMAP" id="MF_00101">
    <property type="entry name" value="AcpS"/>
    <property type="match status" value="1"/>
</dbReference>
<dbReference type="InterPro" id="IPR008278">
    <property type="entry name" value="4-PPantetheinyl_Trfase_dom"/>
</dbReference>
<dbReference type="InterPro" id="IPR037143">
    <property type="entry name" value="4-PPantetheinyl_Trfase_dom_sf"/>
</dbReference>
<dbReference type="InterPro" id="IPR002582">
    <property type="entry name" value="ACPS"/>
</dbReference>
<dbReference type="InterPro" id="IPR004568">
    <property type="entry name" value="Ppantetheine-prot_Trfase_dom"/>
</dbReference>
<dbReference type="NCBIfam" id="TIGR00516">
    <property type="entry name" value="acpS"/>
    <property type="match status" value="1"/>
</dbReference>
<dbReference type="NCBIfam" id="TIGR00556">
    <property type="entry name" value="pantethn_trn"/>
    <property type="match status" value="1"/>
</dbReference>
<dbReference type="Pfam" id="PF01648">
    <property type="entry name" value="ACPS"/>
    <property type="match status" value="1"/>
</dbReference>
<dbReference type="SUPFAM" id="SSF56214">
    <property type="entry name" value="4'-phosphopantetheinyl transferase"/>
    <property type="match status" value="1"/>
</dbReference>
<protein>
    <recommendedName>
        <fullName evidence="1">Holo-[acyl-carrier-protein] synthase</fullName>
        <shortName evidence="1">Holo-ACP synthase</shortName>
        <ecNumber evidence="1">2.7.8.7</ecNumber>
    </recommendedName>
    <alternativeName>
        <fullName evidence="1">4'-phosphopantetheinyl transferase AcpS</fullName>
    </alternativeName>
</protein>
<reference key="1">
    <citation type="journal article" date="2006" name="Genome Res.">
        <title>Massive genome erosion and functional adaptations provide insights into the symbiotic lifestyle of Sodalis glossinidius in the tsetse host.</title>
        <authorList>
            <person name="Toh H."/>
            <person name="Weiss B.L."/>
            <person name="Perkin S.A.H."/>
            <person name="Yamashita A."/>
            <person name="Oshima K."/>
            <person name="Hattori M."/>
            <person name="Aksoy S."/>
        </authorList>
    </citation>
    <scope>NUCLEOTIDE SEQUENCE [LARGE SCALE GENOMIC DNA]</scope>
    <source>
        <strain>morsitans</strain>
    </source>
</reference>
<keyword id="KW-0963">Cytoplasm</keyword>
<keyword id="KW-0275">Fatty acid biosynthesis</keyword>
<keyword id="KW-0276">Fatty acid metabolism</keyword>
<keyword id="KW-0444">Lipid biosynthesis</keyword>
<keyword id="KW-0443">Lipid metabolism</keyword>
<keyword id="KW-0460">Magnesium</keyword>
<keyword id="KW-0479">Metal-binding</keyword>
<keyword id="KW-0808">Transferase</keyword>
<sequence>MAIVGIGTDIVEIGRIEAVVSRSGDRLARRILSPDEWRQYQQHNQLVRFLAKRFAVKEAASKALGTGIRDGLAFTQFEVCNDALGKPSLRLFDQAVVLANRLGVTGMHVTLADERHYACATVIFER</sequence>
<comment type="function">
    <text evidence="1">Transfers the 4'-phosphopantetheine moiety from coenzyme A to a Ser of acyl-carrier-protein.</text>
</comment>
<comment type="catalytic activity">
    <reaction evidence="1">
        <text>apo-[ACP] + CoA = holo-[ACP] + adenosine 3',5'-bisphosphate + H(+)</text>
        <dbReference type="Rhea" id="RHEA:12068"/>
        <dbReference type="Rhea" id="RHEA-COMP:9685"/>
        <dbReference type="Rhea" id="RHEA-COMP:9690"/>
        <dbReference type="ChEBI" id="CHEBI:15378"/>
        <dbReference type="ChEBI" id="CHEBI:29999"/>
        <dbReference type="ChEBI" id="CHEBI:57287"/>
        <dbReference type="ChEBI" id="CHEBI:58343"/>
        <dbReference type="ChEBI" id="CHEBI:64479"/>
        <dbReference type="EC" id="2.7.8.7"/>
    </reaction>
</comment>
<comment type="cofactor">
    <cofactor evidence="1">
        <name>Mg(2+)</name>
        <dbReference type="ChEBI" id="CHEBI:18420"/>
    </cofactor>
</comment>
<comment type="subcellular location">
    <subcellularLocation>
        <location evidence="1">Cytoplasm</location>
    </subcellularLocation>
</comment>
<comment type="similarity">
    <text evidence="1">Belongs to the P-Pant transferase superfamily. AcpS family.</text>
</comment>
<feature type="chain" id="PRO_1000008503" description="Holo-[acyl-carrier-protein] synthase">
    <location>
        <begin position="1"/>
        <end position="126"/>
    </location>
</feature>
<feature type="binding site" evidence="1">
    <location>
        <position position="9"/>
    </location>
    <ligand>
        <name>Mg(2+)</name>
        <dbReference type="ChEBI" id="CHEBI:18420"/>
    </ligand>
</feature>
<feature type="binding site" evidence="1">
    <location>
        <position position="58"/>
    </location>
    <ligand>
        <name>Mg(2+)</name>
        <dbReference type="ChEBI" id="CHEBI:18420"/>
    </ligand>
</feature>
<gene>
    <name evidence="1" type="primary">acpS</name>
    <name type="ordered locus">SG1783</name>
</gene>
<organism>
    <name type="scientific">Sodalis glossinidius (strain morsitans)</name>
    <dbReference type="NCBI Taxonomy" id="343509"/>
    <lineage>
        <taxon>Bacteria</taxon>
        <taxon>Pseudomonadati</taxon>
        <taxon>Pseudomonadota</taxon>
        <taxon>Gammaproteobacteria</taxon>
        <taxon>Enterobacterales</taxon>
        <taxon>Bruguierivoracaceae</taxon>
        <taxon>Sodalis</taxon>
    </lineage>
</organism>
<proteinExistence type="inferred from homology"/>
<name>ACPS_SODGM</name>